<dbReference type="EC" id="2.1.1.186" evidence="1"/>
<dbReference type="EMBL" id="CP001111">
    <property type="protein sequence ID" value="ACF50383.1"/>
    <property type="molecule type" value="Genomic_DNA"/>
</dbReference>
<dbReference type="RefSeq" id="WP_012510108.1">
    <property type="nucleotide sequence ID" value="NC_011071.1"/>
</dbReference>
<dbReference type="SMR" id="B4SK51"/>
<dbReference type="STRING" id="391008.Smal_0678"/>
<dbReference type="KEGG" id="smt:Smal_0678"/>
<dbReference type="eggNOG" id="COG2933">
    <property type="taxonomic scope" value="Bacteria"/>
</dbReference>
<dbReference type="HOGENOM" id="CLU_043780_0_0_6"/>
<dbReference type="OrthoDB" id="154490at2"/>
<dbReference type="Proteomes" id="UP000001867">
    <property type="component" value="Chromosome"/>
</dbReference>
<dbReference type="GO" id="GO:0005737">
    <property type="term" value="C:cytoplasm"/>
    <property type="evidence" value="ECO:0007669"/>
    <property type="project" value="UniProtKB-SubCell"/>
</dbReference>
<dbReference type="GO" id="GO:0008757">
    <property type="term" value="F:S-adenosylmethionine-dependent methyltransferase activity"/>
    <property type="evidence" value="ECO:0007669"/>
    <property type="project" value="UniProtKB-UniRule"/>
</dbReference>
<dbReference type="GO" id="GO:0032259">
    <property type="term" value="P:methylation"/>
    <property type="evidence" value="ECO:0007669"/>
    <property type="project" value="UniProtKB-KW"/>
</dbReference>
<dbReference type="GO" id="GO:0006364">
    <property type="term" value="P:rRNA processing"/>
    <property type="evidence" value="ECO:0007669"/>
    <property type="project" value="UniProtKB-UniRule"/>
</dbReference>
<dbReference type="Gene3D" id="3.30.2300.20">
    <property type="match status" value="1"/>
</dbReference>
<dbReference type="Gene3D" id="3.30.70.2810">
    <property type="match status" value="1"/>
</dbReference>
<dbReference type="Gene3D" id="3.40.50.150">
    <property type="entry name" value="Vaccinia Virus protein VP39"/>
    <property type="match status" value="1"/>
</dbReference>
<dbReference type="HAMAP" id="MF_01551">
    <property type="entry name" value="23SrRNA_methyltr_M"/>
    <property type="match status" value="1"/>
</dbReference>
<dbReference type="InterPro" id="IPR040739">
    <property type="entry name" value="RlmM_FDX"/>
</dbReference>
<dbReference type="InterPro" id="IPR048646">
    <property type="entry name" value="RlmM_THUMP-like"/>
</dbReference>
<dbReference type="InterPro" id="IPR002877">
    <property type="entry name" value="RNA_MeTrfase_FtsJ_dom"/>
</dbReference>
<dbReference type="InterPro" id="IPR011224">
    <property type="entry name" value="rRNA_MeTrfase_M"/>
</dbReference>
<dbReference type="InterPro" id="IPR029063">
    <property type="entry name" value="SAM-dependent_MTases_sf"/>
</dbReference>
<dbReference type="NCBIfam" id="NF008734">
    <property type="entry name" value="PRK11760.1"/>
    <property type="match status" value="1"/>
</dbReference>
<dbReference type="PANTHER" id="PTHR37524">
    <property type="entry name" value="RIBOSOMAL RNA LARGE SUBUNIT METHYLTRANSFERASE M"/>
    <property type="match status" value="1"/>
</dbReference>
<dbReference type="PANTHER" id="PTHR37524:SF2">
    <property type="entry name" value="RIBOSOMAL RNA METHYLTRANSFERASE FTSJ DOMAIN-CONTAINING PROTEIN"/>
    <property type="match status" value="1"/>
</dbReference>
<dbReference type="Pfam" id="PF01728">
    <property type="entry name" value="FtsJ"/>
    <property type="match status" value="1"/>
</dbReference>
<dbReference type="Pfam" id="PF18125">
    <property type="entry name" value="RlmM_FDX"/>
    <property type="match status" value="1"/>
</dbReference>
<dbReference type="Pfam" id="PF21239">
    <property type="entry name" value="RLMM_N"/>
    <property type="match status" value="1"/>
</dbReference>
<dbReference type="PIRSF" id="PIRSF028774">
    <property type="entry name" value="UCP028774"/>
    <property type="match status" value="1"/>
</dbReference>
<dbReference type="SUPFAM" id="SSF53335">
    <property type="entry name" value="S-adenosyl-L-methionine-dependent methyltransferases"/>
    <property type="match status" value="1"/>
</dbReference>
<comment type="function">
    <text evidence="1">Catalyzes the 2'-O-methylation at nucleotide C2498 in 23S rRNA.</text>
</comment>
<comment type="catalytic activity">
    <reaction evidence="1">
        <text>cytidine(2498) in 23S rRNA + S-adenosyl-L-methionine = 2'-O-methylcytidine(2498) in 23S rRNA + S-adenosyl-L-homocysteine + H(+)</text>
        <dbReference type="Rhea" id="RHEA:42788"/>
        <dbReference type="Rhea" id="RHEA-COMP:10244"/>
        <dbReference type="Rhea" id="RHEA-COMP:10245"/>
        <dbReference type="ChEBI" id="CHEBI:15378"/>
        <dbReference type="ChEBI" id="CHEBI:57856"/>
        <dbReference type="ChEBI" id="CHEBI:59789"/>
        <dbReference type="ChEBI" id="CHEBI:74495"/>
        <dbReference type="ChEBI" id="CHEBI:82748"/>
        <dbReference type="EC" id="2.1.1.186"/>
    </reaction>
</comment>
<comment type="subunit">
    <text evidence="1">Monomer.</text>
</comment>
<comment type="subcellular location">
    <subcellularLocation>
        <location evidence="1">Cytoplasm</location>
    </subcellularLocation>
</comment>
<comment type="similarity">
    <text evidence="1">Belongs to the class I-like SAM-binding methyltransferase superfamily. RNA methyltransferase RlmE family. RlmM subfamily.</text>
</comment>
<organism>
    <name type="scientific">Stenotrophomonas maltophilia (strain R551-3)</name>
    <dbReference type="NCBI Taxonomy" id="391008"/>
    <lineage>
        <taxon>Bacteria</taxon>
        <taxon>Pseudomonadati</taxon>
        <taxon>Pseudomonadota</taxon>
        <taxon>Gammaproteobacteria</taxon>
        <taxon>Lysobacterales</taxon>
        <taxon>Lysobacteraceae</taxon>
        <taxon>Stenotrophomonas</taxon>
        <taxon>Stenotrophomonas maltophilia group</taxon>
    </lineage>
</organism>
<reference key="1">
    <citation type="submission" date="2008-06" db="EMBL/GenBank/DDBJ databases">
        <title>Complete sequence of Stenotrophomonas maltophilia R551-3.</title>
        <authorList>
            <consortium name="US DOE Joint Genome Institute"/>
            <person name="Lucas S."/>
            <person name="Copeland A."/>
            <person name="Lapidus A."/>
            <person name="Glavina del Rio T."/>
            <person name="Dalin E."/>
            <person name="Tice H."/>
            <person name="Pitluck S."/>
            <person name="Chain P."/>
            <person name="Malfatti S."/>
            <person name="Shin M."/>
            <person name="Vergez L."/>
            <person name="Lang D."/>
            <person name="Schmutz J."/>
            <person name="Larimer F."/>
            <person name="Land M."/>
            <person name="Hauser L."/>
            <person name="Kyrpides N."/>
            <person name="Mikhailova N."/>
            <person name="Taghavi S."/>
            <person name="Monchy S."/>
            <person name="Newman L."/>
            <person name="Vangronsveld J."/>
            <person name="van der Lelie D."/>
            <person name="Richardson P."/>
        </authorList>
    </citation>
    <scope>NUCLEOTIDE SEQUENCE [LARGE SCALE GENOMIC DNA]</scope>
    <source>
        <strain>R551-3</strain>
    </source>
</reference>
<accession>B4SK51</accession>
<evidence type="ECO:0000255" key="1">
    <source>
        <dbReference type="HAMAP-Rule" id="MF_01551"/>
    </source>
</evidence>
<keyword id="KW-0963">Cytoplasm</keyword>
<keyword id="KW-0489">Methyltransferase</keyword>
<keyword id="KW-0698">rRNA processing</keyword>
<keyword id="KW-0949">S-adenosyl-L-methionine</keyword>
<keyword id="KW-0808">Transferase</keyword>
<sequence>MAPVTETGIGLLCLCRQGFEPELAGELQFRASEAGFAGYARTQRNDGYVLFMCDEAAALAPRLRWRELIFARQKLVVLAELPQLDPADRITPMLEVLADAPRFGDLWVEHPDSDAGKPLSGLARAFGNALRPALRKAGKLTDKPNNRLPRLHVVFVDGTHAFVCVADPADSAPWALGIPRLKLLPEAPSRSALKLDEALLTLLTPEEREALAKPGMRAADLGAAPGGWTWVLTRQHMHVLSIDNGPLRQHVLDTGLVEHLRADGFHWHPEQPLDWMVCDMVEQPRRVAERMATWFREGWCRHAIFNLKLPMKKRWDETRLCLDLFQEQAGKPLVVRAKQLYHDREEITVLASPLR</sequence>
<feature type="chain" id="PRO_0000388988" description="Ribosomal RNA large subunit methyltransferase M">
    <location>
        <begin position="1"/>
        <end position="355"/>
    </location>
</feature>
<feature type="active site" description="Proton acceptor" evidence="1">
    <location>
        <position position="308"/>
    </location>
</feature>
<feature type="binding site" evidence="1">
    <location>
        <position position="191"/>
    </location>
    <ligand>
        <name>S-adenosyl-L-methionine</name>
        <dbReference type="ChEBI" id="CHEBI:59789"/>
    </ligand>
</feature>
<feature type="binding site" evidence="1">
    <location>
        <begin position="224"/>
        <end position="227"/>
    </location>
    <ligand>
        <name>S-adenosyl-L-methionine</name>
        <dbReference type="ChEBI" id="CHEBI:59789"/>
    </ligand>
</feature>
<feature type="binding site" evidence="1">
    <location>
        <position position="243"/>
    </location>
    <ligand>
        <name>S-adenosyl-L-methionine</name>
        <dbReference type="ChEBI" id="CHEBI:59789"/>
    </ligand>
</feature>
<feature type="binding site" evidence="1">
    <location>
        <position position="263"/>
    </location>
    <ligand>
        <name>S-adenosyl-L-methionine</name>
        <dbReference type="ChEBI" id="CHEBI:59789"/>
    </ligand>
</feature>
<feature type="binding site" evidence="1">
    <location>
        <position position="279"/>
    </location>
    <ligand>
        <name>S-adenosyl-L-methionine</name>
        <dbReference type="ChEBI" id="CHEBI:59789"/>
    </ligand>
</feature>
<name>RLMM_STRM5</name>
<protein>
    <recommendedName>
        <fullName evidence="1">Ribosomal RNA large subunit methyltransferase M</fullName>
        <ecNumber evidence="1">2.1.1.186</ecNumber>
    </recommendedName>
    <alternativeName>
        <fullName evidence="1">23S rRNA (cytidine2498-2'-O)-methyltransferase</fullName>
    </alternativeName>
    <alternativeName>
        <fullName evidence="1">23S rRNA 2'-O-ribose methyltransferase RlmM</fullName>
    </alternativeName>
</protein>
<proteinExistence type="inferred from homology"/>
<gene>
    <name evidence="1" type="primary">rlmM</name>
    <name type="ordered locus">Smal_0678</name>
</gene>